<accession>Q2TBU0</accession>
<keyword id="KW-0011">Acute phase</keyword>
<keyword id="KW-0044">Antibiotic</keyword>
<keyword id="KW-0929">Antimicrobial</keyword>
<keyword id="KW-0049">Antioxidant</keyword>
<keyword id="KW-1015">Disulfide bond</keyword>
<keyword id="KW-0325">Glycoprotein</keyword>
<keyword id="KW-0351">Hemoglobin-binding</keyword>
<keyword id="KW-0391">Immunity</keyword>
<keyword id="KW-1185">Reference proteome</keyword>
<keyword id="KW-0677">Repeat</keyword>
<keyword id="KW-0964">Secreted</keyword>
<keyword id="KW-0721">Serine protease homolog</keyword>
<keyword id="KW-0732">Signal</keyword>
<keyword id="KW-0768">Sushi</keyword>
<evidence type="ECO:0000250" key="1"/>
<evidence type="ECO:0000250" key="2">
    <source>
        <dbReference type="UniProtKB" id="P00738"/>
    </source>
</evidence>
<evidence type="ECO:0000250" key="3">
    <source>
        <dbReference type="UniProtKB" id="Q8SPS7"/>
    </source>
</evidence>
<evidence type="ECO:0000255" key="4"/>
<evidence type="ECO:0000255" key="5">
    <source>
        <dbReference type="PROSITE-ProRule" id="PRU00274"/>
    </source>
</evidence>
<evidence type="ECO:0000255" key="6">
    <source>
        <dbReference type="PROSITE-ProRule" id="PRU00302"/>
    </source>
</evidence>
<evidence type="ECO:0000305" key="7"/>
<feature type="signal peptide" evidence="1">
    <location>
        <begin position="1"/>
        <end position="18"/>
    </location>
</feature>
<feature type="chain" id="PRO_0000367489" description="Haptoglobin">
    <location>
        <begin position="19"/>
        <end position="401"/>
    </location>
</feature>
<feature type="chain" id="PRO_0000367490" description="Haptoglobin alpha chain" evidence="1">
    <location>
        <begin position="19"/>
        <end position="155"/>
    </location>
</feature>
<feature type="chain" id="PRO_0000367491" description="Haptoglobin beta chain" evidence="1">
    <location>
        <begin position="157"/>
        <end position="401"/>
    </location>
</feature>
<feature type="domain" description="Sushi 1" evidence="6">
    <location>
        <begin position="28"/>
        <end position="83"/>
    </location>
</feature>
<feature type="domain" description="Sushi 2" evidence="6">
    <location>
        <begin position="85"/>
        <end position="142"/>
    </location>
</feature>
<feature type="domain" description="Peptidase S1" evidence="5">
    <location>
        <begin position="157"/>
        <end position="399"/>
    </location>
</feature>
<feature type="region of interest" description="Interaction with CD163" evidence="1">
    <location>
        <begin position="313"/>
        <end position="318"/>
    </location>
</feature>
<feature type="glycosylation site" description="N-linked (GlcNAc...) asparagine" evidence="4">
    <location>
        <position position="286"/>
    </location>
</feature>
<feature type="glycosylation site" description="N-linked (GlcNAc...) asparagine" evidence="4">
    <location>
        <position position="316"/>
    </location>
</feature>
<feature type="disulfide bond" description="Interchain" evidence="1">
    <location>
        <position position="30"/>
    </location>
</feature>
<feature type="disulfide bond" evidence="1">
    <location>
        <begin position="49"/>
        <end position="81"/>
    </location>
</feature>
<feature type="disulfide bond" description="Interchain" evidence="1">
    <location>
        <position position="87"/>
    </location>
</feature>
<feature type="disulfide bond" evidence="1">
    <location>
        <begin position="106"/>
        <end position="140"/>
    </location>
</feature>
<feature type="disulfide bond" description="Interchain (between alpha and beta chains)" evidence="5 6">
    <location>
        <begin position="144"/>
        <end position="261"/>
    </location>
</feature>
<feature type="disulfide bond" evidence="1">
    <location>
        <begin position="304"/>
        <end position="335"/>
    </location>
</feature>
<feature type="disulfide bond" evidence="1">
    <location>
        <begin position="346"/>
        <end position="376"/>
    </location>
</feature>
<protein>
    <recommendedName>
        <fullName>Haptoglobin</fullName>
    </recommendedName>
    <component>
        <recommendedName>
            <fullName>Haptoglobin alpha chain</fullName>
        </recommendedName>
    </component>
    <component>
        <recommendedName>
            <fullName>Haptoglobin beta chain</fullName>
        </recommendedName>
    </component>
</protein>
<sequence>MSALQAVVTLLLCGQLLAVETGSEATADSCPKAPEIANSHVEYSVRYQCDKYYKLHAGNGVYTFNNKQWINKDIGQQLPECEEDDSCPEPPKIENGYVEYLVRYQCKPYYTLRTCGDGVYTFNSKKQWINKNIGQKLPECEAVCGKPKHPVDQVQRIIGGSLDAKGSFPWQAKMVSQHNLISGATLINERWLLTTAKNLYLGHSSDKKAKDITPTLRLYVGKNQLVEVEKVVLHPDHSKVDIGLIKLRQKVPVNDKVMPICLPSKDYVKVGRVGYVSGWGRNENFNFTEHLKYVMLPVADQDKCVKHYEGVDAPKNKTAKSPVGVQPILNENTFCVGLSKYQDDTCYGDAGSAFVVHDKEDDTWYAAGILSFDKSCAVAEYGVYVKVTSILDWVRKTIANN</sequence>
<organism>
    <name type="scientific">Bos taurus</name>
    <name type="common">Bovine</name>
    <dbReference type="NCBI Taxonomy" id="9913"/>
    <lineage>
        <taxon>Eukaryota</taxon>
        <taxon>Metazoa</taxon>
        <taxon>Chordata</taxon>
        <taxon>Craniata</taxon>
        <taxon>Vertebrata</taxon>
        <taxon>Euteleostomi</taxon>
        <taxon>Mammalia</taxon>
        <taxon>Eutheria</taxon>
        <taxon>Laurasiatheria</taxon>
        <taxon>Artiodactyla</taxon>
        <taxon>Ruminantia</taxon>
        <taxon>Pecora</taxon>
        <taxon>Bovidae</taxon>
        <taxon>Bovinae</taxon>
        <taxon>Bos</taxon>
    </lineage>
</organism>
<name>HPT_BOVIN</name>
<proteinExistence type="evidence at transcript level"/>
<gene>
    <name type="primary">HP</name>
</gene>
<reference key="1">
    <citation type="submission" date="2005-11" db="EMBL/GenBank/DDBJ databases">
        <authorList>
            <consortium name="NIH - Mammalian Gene Collection (MGC) project"/>
        </authorList>
    </citation>
    <scope>NUCLEOTIDE SEQUENCE [LARGE SCALE MRNA]</scope>
    <source>
        <strain>Crossbred X Angus</strain>
        <tissue>Liver</tissue>
    </source>
</reference>
<dbReference type="EMBL" id="BC109668">
    <property type="protein sequence ID" value="AAI09669.1"/>
    <property type="molecule type" value="mRNA"/>
</dbReference>
<dbReference type="RefSeq" id="NP_001035560.1">
    <property type="nucleotide sequence ID" value="NM_001040470.2"/>
</dbReference>
<dbReference type="SMR" id="Q2TBU0"/>
<dbReference type="FunCoup" id="Q2TBU0">
    <property type="interactions" value="173"/>
</dbReference>
<dbReference type="STRING" id="9913.ENSBTAP00000071329"/>
<dbReference type="MEROPS" id="S01.972"/>
<dbReference type="GlyCosmos" id="Q2TBU0">
    <property type="glycosylation" value="2 sites, No reported glycans"/>
</dbReference>
<dbReference type="GlyGen" id="Q2TBU0">
    <property type="glycosylation" value="2 sites"/>
</dbReference>
<dbReference type="PaxDb" id="9913-ENSBTAP00000008335"/>
<dbReference type="PeptideAtlas" id="Q2TBU0"/>
<dbReference type="Ensembl" id="ENSBTAT00000008335.6">
    <property type="protein sequence ID" value="ENSBTAP00000008335.6"/>
    <property type="gene ID" value="ENSBTAG00000006354.7"/>
</dbReference>
<dbReference type="GeneID" id="280692"/>
<dbReference type="KEGG" id="bta:280692"/>
<dbReference type="CTD" id="3240"/>
<dbReference type="eggNOG" id="KOG3627">
    <property type="taxonomic scope" value="Eukaryota"/>
</dbReference>
<dbReference type="GeneTree" id="ENSGT00940000159903"/>
<dbReference type="InParanoid" id="Q2TBU0"/>
<dbReference type="OrthoDB" id="6339452at2759"/>
<dbReference type="Proteomes" id="UP000009136">
    <property type="component" value="Chromosome 18"/>
</dbReference>
<dbReference type="GO" id="GO:0072562">
    <property type="term" value="C:blood microparticle"/>
    <property type="evidence" value="ECO:0000318"/>
    <property type="project" value="GO_Central"/>
</dbReference>
<dbReference type="GO" id="GO:0005615">
    <property type="term" value="C:extracellular space"/>
    <property type="evidence" value="ECO:0000318"/>
    <property type="project" value="GO_Central"/>
</dbReference>
<dbReference type="GO" id="GO:0016209">
    <property type="term" value="F:antioxidant activity"/>
    <property type="evidence" value="ECO:0007669"/>
    <property type="project" value="UniProtKB-KW"/>
</dbReference>
<dbReference type="GO" id="GO:0030492">
    <property type="term" value="F:hemoglobin binding"/>
    <property type="evidence" value="ECO:0007669"/>
    <property type="project" value="UniProtKB-KW"/>
</dbReference>
<dbReference type="GO" id="GO:0004252">
    <property type="term" value="F:serine-type endopeptidase activity"/>
    <property type="evidence" value="ECO:0000318"/>
    <property type="project" value="GO_Central"/>
</dbReference>
<dbReference type="GO" id="GO:0006953">
    <property type="term" value="P:acute-phase response"/>
    <property type="evidence" value="ECO:0007669"/>
    <property type="project" value="UniProtKB-KW"/>
</dbReference>
<dbReference type="GO" id="GO:0042742">
    <property type="term" value="P:defense response to bacterium"/>
    <property type="evidence" value="ECO:0007669"/>
    <property type="project" value="UniProtKB-KW"/>
</dbReference>
<dbReference type="GO" id="GO:0002376">
    <property type="term" value="P:immune system process"/>
    <property type="evidence" value="ECO:0007669"/>
    <property type="project" value="UniProtKB-KW"/>
</dbReference>
<dbReference type="GO" id="GO:0007219">
    <property type="term" value="P:Notch signaling pathway"/>
    <property type="evidence" value="ECO:0007669"/>
    <property type="project" value="Ensembl"/>
</dbReference>
<dbReference type="GO" id="GO:0031638">
    <property type="term" value="P:zymogen activation"/>
    <property type="evidence" value="ECO:0000318"/>
    <property type="project" value="GO_Central"/>
</dbReference>
<dbReference type="CDD" id="cd00033">
    <property type="entry name" value="CCP"/>
    <property type="match status" value="1"/>
</dbReference>
<dbReference type="CDD" id="cd00190">
    <property type="entry name" value="Tryp_SPc"/>
    <property type="match status" value="1"/>
</dbReference>
<dbReference type="FunFam" id="2.10.70.10:FF:000048">
    <property type="entry name" value="Haptoglobin"/>
    <property type="match status" value="1"/>
</dbReference>
<dbReference type="FunFam" id="2.40.10.10:FF:000027">
    <property type="entry name" value="Haptoglobin"/>
    <property type="match status" value="1"/>
</dbReference>
<dbReference type="FunFam" id="2.40.10.10:FF:000031">
    <property type="entry name" value="Haptoglobin"/>
    <property type="match status" value="1"/>
</dbReference>
<dbReference type="Gene3D" id="2.10.70.10">
    <property type="entry name" value="Complement Module, domain 1"/>
    <property type="match status" value="2"/>
</dbReference>
<dbReference type="Gene3D" id="2.40.10.10">
    <property type="entry name" value="Trypsin-like serine proteases"/>
    <property type="match status" value="2"/>
</dbReference>
<dbReference type="InterPro" id="IPR009003">
    <property type="entry name" value="Peptidase_S1_PA"/>
</dbReference>
<dbReference type="InterPro" id="IPR043504">
    <property type="entry name" value="Peptidase_S1_PA_chymotrypsin"/>
</dbReference>
<dbReference type="InterPro" id="IPR001314">
    <property type="entry name" value="Peptidase_S1A"/>
</dbReference>
<dbReference type="InterPro" id="IPR035976">
    <property type="entry name" value="Sushi/SCR/CCP_sf"/>
</dbReference>
<dbReference type="InterPro" id="IPR000436">
    <property type="entry name" value="Sushi_SCR_CCP_dom"/>
</dbReference>
<dbReference type="InterPro" id="IPR001254">
    <property type="entry name" value="Trypsin_dom"/>
</dbReference>
<dbReference type="PANTHER" id="PTHR24255">
    <property type="entry name" value="COMPLEMENT COMPONENT 1, S SUBCOMPONENT-RELATED"/>
    <property type="match status" value="1"/>
</dbReference>
<dbReference type="PANTHER" id="PTHR24255:SF27">
    <property type="entry name" value="HAPTOGLOBIN-RELATED PROTEIN"/>
    <property type="match status" value="1"/>
</dbReference>
<dbReference type="Pfam" id="PF00089">
    <property type="entry name" value="Trypsin"/>
    <property type="match status" value="1"/>
</dbReference>
<dbReference type="PRINTS" id="PR00722">
    <property type="entry name" value="CHYMOTRYPSIN"/>
</dbReference>
<dbReference type="SMART" id="SM00020">
    <property type="entry name" value="Tryp_SPc"/>
    <property type="match status" value="1"/>
</dbReference>
<dbReference type="SUPFAM" id="SSF57535">
    <property type="entry name" value="Complement control module/SCR domain"/>
    <property type="match status" value="2"/>
</dbReference>
<dbReference type="SUPFAM" id="SSF50494">
    <property type="entry name" value="Trypsin-like serine proteases"/>
    <property type="match status" value="1"/>
</dbReference>
<dbReference type="PROSITE" id="PS50923">
    <property type="entry name" value="SUSHI"/>
    <property type="match status" value="2"/>
</dbReference>
<dbReference type="PROSITE" id="PS50240">
    <property type="entry name" value="TRYPSIN_DOM"/>
    <property type="match status" value="1"/>
</dbReference>
<comment type="function">
    <text evidence="1">As a result of hemolysis, hemoglobin is found to accumulate in the kidney and is secreted in the urine. Haptoglobin captures, and combines with free plasma hemoglobin to allow hepatic recycling of heme iron and to prevent kidney damage. Haptoglobin also acts as an antioxidant, has antibacterial activity and plays a role in modulating many aspects of the acute phase response. Hemoglobin/haptoglobin complexes are rapidly cleared by the macrophage CD163 scavenger receptor expressed on the surface of liver Kupfer cells through an endocytic lysosomal degradation pathway (By similarity).</text>
</comment>
<comment type="subunit">
    <text evidence="2 3">Tetramer of two alpha and two beta chains; disulfide-linked (By similarity). The hemoglobin/haptoglobin complex is composed of a haptoglobin dimer bound to two hemoglobin alpha-beta dimers (By similarity). Interacts with CD163 (By similarity). Interacts with ERGIC3 (By similarity).</text>
</comment>
<comment type="subcellular location">
    <subcellularLocation>
        <location evidence="1">Secreted</location>
        <location evidence="1">Extracellular space</location>
    </subcellularLocation>
</comment>
<comment type="tissue specificity">
    <text>Expressed by the liver and secreted in plasma.</text>
</comment>
<comment type="domain">
    <text evidence="1">The beta chain mediates most of the interactions with both subunits of hemoglobin, while the alpha chain forms the homodimeric interface.</text>
</comment>
<comment type="similarity">
    <text evidence="5">Belongs to the peptidase S1 family.</text>
</comment>
<comment type="caution">
    <text evidence="7">Although homologous to serine proteases, it has lost all essential catalytic residues and has no enzymatic activity.</text>
</comment>